<name>ARGJ_YARLI</name>
<proteinExistence type="inferred from homology"/>
<feature type="chain" id="PRO_0000398125" description="Arginine biosynthesis bifunctional protein ArgJ alpha chain" evidence="1">
    <location>
        <begin position="1"/>
        <end position="210"/>
    </location>
</feature>
<feature type="chain" id="PRO_0000398126" description="Arginine biosynthesis bifunctional protein ArgJ beta chain" evidence="1">
    <location>
        <begin position="211"/>
        <end position="431"/>
    </location>
</feature>
<feature type="active site" description="Nucleophile" evidence="1">
    <location>
        <position position="211"/>
    </location>
</feature>
<feature type="binding site" evidence="1">
    <location>
        <position position="174"/>
    </location>
    <ligand>
        <name>substrate</name>
    </ligand>
</feature>
<feature type="binding site" evidence="1">
    <location>
        <position position="200"/>
    </location>
    <ligand>
        <name>substrate</name>
    </ligand>
</feature>
<feature type="binding site" evidence="1">
    <location>
        <position position="211"/>
    </location>
    <ligand>
        <name>substrate</name>
    </ligand>
</feature>
<feature type="binding site" evidence="1">
    <location>
        <position position="297"/>
    </location>
    <ligand>
        <name>substrate</name>
    </ligand>
</feature>
<feature type="binding site" evidence="1">
    <location>
        <position position="426"/>
    </location>
    <ligand>
        <name>substrate</name>
    </ligand>
</feature>
<feature type="binding site" evidence="1">
    <location>
        <position position="431"/>
    </location>
    <ligand>
        <name>substrate</name>
    </ligand>
</feature>
<feature type="site" description="Involved in the stabilization of negative charge on the oxyanion by the formation of the oxyanion hole" evidence="1">
    <location>
        <position position="135"/>
    </location>
</feature>
<feature type="site" description="Involved in the stabilization of negative charge on the oxyanion by the formation of the oxyanion hole" evidence="1">
    <location>
        <position position="136"/>
    </location>
</feature>
<feature type="site" description="Cleavage; by autolysis" evidence="1">
    <location>
        <begin position="210"/>
        <end position="211"/>
    </location>
</feature>
<protein>
    <recommendedName>
        <fullName evidence="1">Arginine biosynthesis bifunctional protein ArgJ, mitochondrial</fullName>
    </recommendedName>
    <domain>
        <recommendedName>
            <fullName evidence="1">Glutamate N-acetyltransferase</fullName>
            <shortName evidence="1">GAT</shortName>
            <ecNumber evidence="1">2.3.1.35</ecNumber>
        </recommendedName>
        <alternativeName>
            <fullName evidence="1">Ornithine acetyltransferase</fullName>
            <shortName evidence="1">OATase</shortName>
        </alternativeName>
        <alternativeName>
            <fullName evidence="1">Ornithine transacetylase</fullName>
        </alternativeName>
    </domain>
    <domain>
        <recommendedName>
            <fullName evidence="1">Amino-acid acetyltransferase</fullName>
            <ecNumber evidence="1">2.3.1.1</ecNumber>
        </recommendedName>
        <alternativeName>
            <fullName evidence="1">N-acetylglutamate synthase</fullName>
            <shortName evidence="1">AGS</shortName>
        </alternativeName>
    </domain>
    <component>
        <recommendedName>
            <fullName evidence="1">Arginine biosynthesis bifunctional protein ArgJ alpha chain</fullName>
        </recommendedName>
    </component>
    <component>
        <recommendedName>
            <fullName evidence="1">Arginine biosynthesis bifunctional protein ArgJ beta chain</fullName>
        </recommendedName>
    </component>
</protein>
<comment type="function">
    <text evidence="1">Catalyzes two activities which are involved in the cyclic version of arginine biosynthesis: the synthesis of acetylglutamate from glutamate and acetyl-CoA, and of ornithine by transacetylation between acetylornithine and glutamate.</text>
</comment>
<comment type="catalytic activity">
    <reaction evidence="1">
        <text>N(2)-acetyl-L-ornithine + L-glutamate = N-acetyl-L-glutamate + L-ornithine</text>
        <dbReference type="Rhea" id="RHEA:15349"/>
        <dbReference type="ChEBI" id="CHEBI:29985"/>
        <dbReference type="ChEBI" id="CHEBI:44337"/>
        <dbReference type="ChEBI" id="CHEBI:46911"/>
        <dbReference type="ChEBI" id="CHEBI:57805"/>
        <dbReference type="EC" id="2.3.1.35"/>
    </reaction>
</comment>
<comment type="catalytic activity">
    <reaction evidence="1">
        <text>L-glutamate + acetyl-CoA = N-acetyl-L-glutamate + CoA + H(+)</text>
        <dbReference type="Rhea" id="RHEA:24292"/>
        <dbReference type="ChEBI" id="CHEBI:15378"/>
        <dbReference type="ChEBI" id="CHEBI:29985"/>
        <dbReference type="ChEBI" id="CHEBI:44337"/>
        <dbReference type="ChEBI" id="CHEBI:57287"/>
        <dbReference type="ChEBI" id="CHEBI:57288"/>
        <dbReference type="EC" id="2.3.1.1"/>
    </reaction>
</comment>
<comment type="pathway">
    <text evidence="1">Amino-acid biosynthesis; L-arginine biosynthesis; L-ornithine and N-acetyl-L-glutamate from L-glutamate and N(2)-acetyl-L-ornithine (cyclic): step 1/1.</text>
</comment>
<comment type="pathway">
    <text evidence="1">Amino-acid biosynthesis; L-arginine biosynthesis; N(2)-acetyl-L-ornithine from L-glutamate: step 1/4.</text>
</comment>
<comment type="subunit">
    <text evidence="1">Heterodimer of an alpha and a beta chain.</text>
</comment>
<comment type="subcellular location">
    <subcellularLocation>
        <location evidence="1">Mitochondrion matrix</location>
    </subcellularLocation>
</comment>
<comment type="PTM">
    <text evidence="1">The alpha and beta chains are autoproteolytically processed from a single precursor protein within the mitochondrion.</text>
</comment>
<comment type="miscellaneous">
    <text evidence="1">This protein may be expected to contain an N-terminal transit peptide but none has been predicted.</text>
</comment>
<comment type="similarity">
    <text evidence="1">Belongs to the ArgJ family.</text>
</comment>
<accession>Q6C627</accession>
<organism>
    <name type="scientific">Yarrowia lipolytica (strain CLIB 122 / E 150)</name>
    <name type="common">Yeast</name>
    <name type="synonym">Candida lipolytica</name>
    <dbReference type="NCBI Taxonomy" id="284591"/>
    <lineage>
        <taxon>Eukaryota</taxon>
        <taxon>Fungi</taxon>
        <taxon>Dikarya</taxon>
        <taxon>Ascomycota</taxon>
        <taxon>Saccharomycotina</taxon>
        <taxon>Dipodascomycetes</taxon>
        <taxon>Dipodascales</taxon>
        <taxon>Dipodascales incertae sedis</taxon>
        <taxon>Yarrowia</taxon>
    </lineage>
</organism>
<gene>
    <name type="ordered locus">YALI0E13057g</name>
</gene>
<evidence type="ECO:0000255" key="1">
    <source>
        <dbReference type="HAMAP-Rule" id="MF_03124"/>
    </source>
</evidence>
<dbReference type="EC" id="2.3.1.35" evidence="1"/>
<dbReference type="EC" id="2.3.1.1" evidence="1"/>
<dbReference type="EMBL" id="CR382131">
    <property type="protein sequence ID" value="CAG79478.1"/>
    <property type="molecule type" value="Genomic_DNA"/>
</dbReference>
<dbReference type="RefSeq" id="XP_503885.1">
    <property type="nucleotide sequence ID" value="XM_503885.1"/>
</dbReference>
<dbReference type="SMR" id="Q6C627"/>
<dbReference type="FunCoup" id="Q6C627">
    <property type="interactions" value="297"/>
</dbReference>
<dbReference type="STRING" id="284591.Q6C627"/>
<dbReference type="MEROPS" id="T05.001"/>
<dbReference type="EnsemblFungi" id="CAG79478">
    <property type="protein sequence ID" value="CAG79478"/>
    <property type="gene ID" value="YALI0_E13057g"/>
</dbReference>
<dbReference type="KEGG" id="yli:2912016"/>
<dbReference type="VEuPathDB" id="FungiDB:YALI0_E13057g"/>
<dbReference type="HOGENOM" id="CLU_027172_1_0_1"/>
<dbReference type="InParanoid" id="Q6C627"/>
<dbReference type="OMA" id="WGRIVMA"/>
<dbReference type="OrthoDB" id="80327at4891"/>
<dbReference type="UniPathway" id="UPA00068">
    <property type="reaction ID" value="UER00106"/>
</dbReference>
<dbReference type="UniPathway" id="UPA00068">
    <property type="reaction ID" value="UER00111"/>
</dbReference>
<dbReference type="Proteomes" id="UP000001300">
    <property type="component" value="Chromosome E"/>
</dbReference>
<dbReference type="GO" id="GO:0005759">
    <property type="term" value="C:mitochondrial matrix"/>
    <property type="evidence" value="ECO:0000318"/>
    <property type="project" value="GO_Central"/>
</dbReference>
<dbReference type="GO" id="GO:0004358">
    <property type="term" value="F:glutamate N-acetyltransferase activity"/>
    <property type="evidence" value="ECO:0007669"/>
    <property type="project" value="UniProtKB-UniRule"/>
</dbReference>
<dbReference type="GO" id="GO:0004042">
    <property type="term" value="F:L-glutamate N-acetyltransferase activity"/>
    <property type="evidence" value="ECO:0000318"/>
    <property type="project" value="GO_Central"/>
</dbReference>
<dbReference type="GO" id="GO:0006526">
    <property type="term" value="P:L-arginine biosynthetic process"/>
    <property type="evidence" value="ECO:0007669"/>
    <property type="project" value="UniProtKB-UniRule"/>
</dbReference>
<dbReference type="GO" id="GO:0006592">
    <property type="term" value="P:ornithine biosynthetic process"/>
    <property type="evidence" value="ECO:0000318"/>
    <property type="project" value="GO_Central"/>
</dbReference>
<dbReference type="CDD" id="cd02152">
    <property type="entry name" value="OAT"/>
    <property type="match status" value="1"/>
</dbReference>
<dbReference type="FunFam" id="3.60.70.12:FF:000001">
    <property type="entry name" value="Arginine biosynthesis bifunctional protein ArgJ, chloroplastic"/>
    <property type="match status" value="1"/>
</dbReference>
<dbReference type="FunFam" id="3.10.20.340:FF:000002">
    <property type="entry name" value="Arginine biosynthesis bifunctional protein ArgJ, mitochondrial"/>
    <property type="match status" value="1"/>
</dbReference>
<dbReference type="FunFam" id="3.30.2330.10:FF:000001">
    <property type="entry name" value="Arginine biosynthesis bifunctional protein ArgJ, mitochondrial"/>
    <property type="match status" value="1"/>
</dbReference>
<dbReference type="Gene3D" id="3.30.2330.10">
    <property type="entry name" value="arginine biosynthesis bifunctional protein suprefamily"/>
    <property type="match status" value="1"/>
</dbReference>
<dbReference type="Gene3D" id="3.10.20.340">
    <property type="entry name" value="ArgJ beta chain, C-terminal domain"/>
    <property type="match status" value="1"/>
</dbReference>
<dbReference type="Gene3D" id="3.60.70.12">
    <property type="entry name" value="L-amino peptidase D-ALA esterase/amidase"/>
    <property type="match status" value="1"/>
</dbReference>
<dbReference type="HAMAP" id="MF_01106">
    <property type="entry name" value="ArgJ"/>
    <property type="match status" value="1"/>
</dbReference>
<dbReference type="InterPro" id="IPR002813">
    <property type="entry name" value="Arg_biosynth_ArgJ"/>
</dbReference>
<dbReference type="InterPro" id="IPR016117">
    <property type="entry name" value="ArgJ-like_dom_sf"/>
</dbReference>
<dbReference type="InterPro" id="IPR042195">
    <property type="entry name" value="ArgJ_beta_C"/>
</dbReference>
<dbReference type="NCBIfam" id="TIGR00120">
    <property type="entry name" value="ArgJ"/>
    <property type="match status" value="1"/>
</dbReference>
<dbReference type="NCBIfam" id="NF003802">
    <property type="entry name" value="PRK05388.1"/>
    <property type="match status" value="1"/>
</dbReference>
<dbReference type="PANTHER" id="PTHR23100">
    <property type="entry name" value="ARGININE BIOSYNTHESIS BIFUNCTIONAL PROTEIN ARGJ"/>
    <property type="match status" value="1"/>
</dbReference>
<dbReference type="PANTHER" id="PTHR23100:SF0">
    <property type="entry name" value="ARGININE BIOSYNTHESIS BIFUNCTIONAL PROTEIN ARGJ, MITOCHONDRIAL"/>
    <property type="match status" value="1"/>
</dbReference>
<dbReference type="Pfam" id="PF01960">
    <property type="entry name" value="ArgJ"/>
    <property type="match status" value="1"/>
</dbReference>
<dbReference type="SUPFAM" id="SSF56266">
    <property type="entry name" value="DmpA/ArgJ-like"/>
    <property type="match status" value="1"/>
</dbReference>
<reference key="1">
    <citation type="journal article" date="2004" name="Nature">
        <title>Genome evolution in yeasts.</title>
        <authorList>
            <person name="Dujon B."/>
            <person name="Sherman D."/>
            <person name="Fischer G."/>
            <person name="Durrens P."/>
            <person name="Casaregola S."/>
            <person name="Lafontaine I."/>
            <person name="de Montigny J."/>
            <person name="Marck C."/>
            <person name="Neuveglise C."/>
            <person name="Talla E."/>
            <person name="Goffard N."/>
            <person name="Frangeul L."/>
            <person name="Aigle M."/>
            <person name="Anthouard V."/>
            <person name="Babour A."/>
            <person name="Barbe V."/>
            <person name="Barnay S."/>
            <person name="Blanchin S."/>
            <person name="Beckerich J.-M."/>
            <person name="Beyne E."/>
            <person name="Bleykasten C."/>
            <person name="Boisrame A."/>
            <person name="Boyer J."/>
            <person name="Cattolico L."/>
            <person name="Confanioleri F."/>
            <person name="de Daruvar A."/>
            <person name="Despons L."/>
            <person name="Fabre E."/>
            <person name="Fairhead C."/>
            <person name="Ferry-Dumazet H."/>
            <person name="Groppi A."/>
            <person name="Hantraye F."/>
            <person name="Hennequin C."/>
            <person name="Jauniaux N."/>
            <person name="Joyet P."/>
            <person name="Kachouri R."/>
            <person name="Kerrest A."/>
            <person name="Koszul R."/>
            <person name="Lemaire M."/>
            <person name="Lesur I."/>
            <person name="Ma L."/>
            <person name="Muller H."/>
            <person name="Nicaud J.-M."/>
            <person name="Nikolski M."/>
            <person name="Oztas S."/>
            <person name="Ozier-Kalogeropoulos O."/>
            <person name="Pellenz S."/>
            <person name="Potier S."/>
            <person name="Richard G.-F."/>
            <person name="Straub M.-L."/>
            <person name="Suleau A."/>
            <person name="Swennen D."/>
            <person name="Tekaia F."/>
            <person name="Wesolowski-Louvel M."/>
            <person name="Westhof E."/>
            <person name="Wirth B."/>
            <person name="Zeniou-Meyer M."/>
            <person name="Zivanovic Y."/>
            <person name="Bolotin-Fukuhara M."/>
            <person name="Thierry A."/>
            <person name="Bouchier C."/>
            <person name="Caudron B."/>
            <person name="Scarpelli C."/>
            <person name="Gaillardin C."/>
            <person name="Weissenbach J."/>
            <person name="Wincker P."/>
            <person name="Souciet J.-L."/>
        </authorList>
    </citation>
    <scope>NUCLEOTIDE SEQUENCE [LARGE SCALE GENOMIC DNA]</scope>
    <source>
        <strain>CLIB 122 / E 150</strain>
    </source>
</reference>
<sequence>MQVRHFSSCRIVQAGKERFVPSSGTYPKGFKVGGFFTGVKKNAFNMDLAMLSSDKPCNAAAVFTTNVFKAAPVQVDRKILDVTQGKGIKTVVVNSGCANAVTGEGGIHDAQQMVKKADQVFGSESDLPASLVMSTGVIGQRLKIDKILKGIEEHAPAMKDDHEAWLNTAKGICTTDTFPKLMSQQFKIGDNTYTIAGLTKGAGMIHPRMATLLGFFATDAPVSASALGVALKHAADRSFNAISVDGDTSTNDTIVCLANGAAGGPEITETSASFPVFQDILTDFSSRLSQLVVRDGEGATKFVKISVNDAVSEQEAAKVAETVACSPLVKTALYGKDANWGRILCAVGYSGMQVEPTKTTVSFMPTDGSSELKLLVNGEPEQVDEARASEILDMEDLEIQINLGTGGGKNANFWTCDFSHEYVTINGDYRT</sequence>
<keyword id="KW-0012">Acyltransferase</keyword>
<keyword id="KW-0028">Amino-acid biosynthesis</keyword>
<keyword id="KW-0055">Arginine biosynthesis</keyword>
<keyword id="KW-0068">Autocatalytic cleavage</keyword>
<keyword id="KW-0496">Mitochondrion</keyword>
<keyword id="KW-0511">Multifunctional enzyme</keyword>
<keyword id="KW-1185">Reference proteome</keyword>
<keyword id="KW-0808">Transferase</keyword>